<gene>
    <name evidence="1" type="primary">yqhA</name>
    <name type="ordered locus">SeHA_C3401</name>
</gene>
<organism>
    <name type="scientific">Salmonella heidelberg (strain SL476)</name>
    <dbReference type="NCBI Taxonomy" id="454169"/>
    <lineage>
        <taxon>Bacteria</taxon>
        <taxon>Pseudomonadati</taxon>
        <taxon>Pseudomonadota</taxon>
        <taxon>Gammaproteobacteria</taxon>
        <taxon>Enterobacterales</taxon>
        <taxon>Enterobacteriaceae</taxon>
        <taxon>Salmonella</taxon>
    </lineage>
</organism>
<feature type="chain" id="PRO_1000096277" description="UPF0114 protein YqhA">
    <location>
        <begin position="1"/>
        <end position="164"/>
    </location>
</feature>
<feature type="transmembrane region" description="Helical" evidence="1">
    <location>
        <begin position="15"/>
        <end position="35"/>
    </location>
</feature>
<feature type="transmembrane region" description="Helical" evidence="1">
    <location>
        <begin position="53"/>
        <end position="73"/>
    </location>
</feature>
<feature type="transmembrane region" description="Helical" evidence="1">
    <location>
        <begin position="136"/>
        <end position="156"/>
    </location>
</feature>
<comment type="subcellular location">
    <subcellularLocation>
        <location evidence="1">Cell membrane</location>
        <topology evidence="1">Multi-pass membrane protein</topology>
    </subcellularLocation>
</comment>
<comment type="similarity">
    <text evidence="1">Belongs to the UPF0114 family.</text>
</comment>
<reference key="1">
    <citation type="journal article" date="2011" name="J. Bacteriol.">
        <title>Comparative genomics of 28 Salmonella enterica isolates: evidence for CRISPR-mediated adaptive sublineage evolution.</title>
        <authorList>
            <person name="Fricke W.F."/>
            <person name="Mammel M.K."/>
            <person name="McDermott P.F."/>
            <person name="Tartera C."/>
            <person name="White D.G."/>
            <person name="Leclerc J.E."/>
            <person name="Ravel J."/>
            <person name="Cebula T.A."/>
        </authorList>
    </citation>
    <scope>NUCLEOTIDE SEQUENCE [LARGE SCALE GENOMIC DNA]</scope>
    <source>
        <strain>SL476</strain>
    </source>
</reference>
<name>YQHA_SALHS</name>
<accession>B4TI02</accession>
<protein>
    <recommendedName>
        <fullName evidence="1">UPF0114 protein YqhA</fullName>
    </recommendedName>
</protein>
<evidence type="ECO:0000255" key="1">
    <source>
        <dbReference type="HAMAP-Rule" id="MF_00143"/>
    </source>
</evidence>
<sequence>MERFLENVMYASRWLLAPVYFGLSLALIALALKFFQEILHVLPNVFALAEADLILVLLSLVDMTLVGGLLVMVMFSGYENFVSQLDISAGKEKLNWLGKMDATSLKNKVAASIVAISSIHLLRVFMDAKNVPDNKLMWYVIIHLTFVLSAFVMGYLDRLTRHNH</sequence>
<proteinExistence type="inferred from homology"/>
<keyword id="KW-1003">Cell membrane</keyword>
<keyword id="KW-0472">Membrane</keyword>
<keyword id="KW-0812">Transmembrane</keyword>
<keyword id="KW-1133">Transmembrane helix</keyword>
<dbReference type="EMBL" id="CP001120">
    <property type="protein sequence ID" value="ACF67338.1"/>
    <property type="molecule type" value="Genomic_DNA"/>
</dbReference>
<dbReference type="RefSeq" id="WP_000439335.1">
    <property type="nucleotide sequence ID" value="NC_011083.1"/>
</dbReference>
<dbReference type="KEGG" id="seh:SeHA_C3401"/>
<dbReference type="HOGENOM" id="CLU_097887_1_1_6"/>
<dbReference type="Proteomes" id="UP000001866">
    <property type="component" value="Chromosome"/>
</dbReference>
<dbReference type="GO" id="GO:0005886">
    <property type="term" value="C:plasma membrane"/>
    <property type="evidence" value="ECO:0007669"/>
    <property type="project" value="UniProtKB-SubCell"/>
</dbReference>
<dbReference type="HAMAP" id="MF_00143">
    <property type="entry name" value="UPF0114"/>
    <property type="match status" value="1"/>
</dbReference>
<dbReference type="InterPro" id="IPR005134">
    <property type="entry name" value="UPF0114"/>
</dbReference>
<dbReference type="InterPro" id="IPR020761">
    <property type="entry name" value="UPF0114_bac"/>
</dbReference>
<dbReference type="NCBIfam" id="TIGR00645">
    <property type="entry name" value="HI0507"/>
    <property type="match status" value="1"/>
</dbReference>
<dbReference type="PANTHER" id="PTHR38596">
    <property type="entry name" value="UPF0114 PROTEIN YQHA"/>
    <property type="match status" value="1"/>
</dbReference>
<dbReference type="PANTHER" id="PTHR38596:SF1">
    <property type="entry name" value="UPF0114 PROTEIN YQHA"/>
    <property type="match status" value="1"/>
</dbReference>
<dbReference type="Pfam" id="PF03350">
    <property type="entry name" value="UPF0114"/>
    <property type="match status" value="1"/>
</dbReference>